<comment type="function">
    <text evidence="1">Voltage-gated calcium channel inhibitor.</text>
</comment>
<comment type="subcellular location">
    <subcellularLocation>
        <location evidence="1">Secreted</location>
    </subcellularLocation>
</comment>
<comment type="tissue specificity">
    <text evidence="4">Expressed by the venom gland.</text>
</comment>
<comment type="PTM">
    <text evidence="3">Contains 3 disulfide bonds.</text>
</comment>
<comment type="mass spectrometry"/>
<comment type="similarity">
    <text evidence="3">Belongs to the CRISP family. Venom allergen 5-like subfamily.</text>
</comment>
<keyword id="KW-0108">Calcium channel impairing toxin</keyword>
<keyword id="KW-0903">Direct protein sequencing</keyword>
<keyword id="KW-1015">Disulfide bond</keyword>
<keyword id="KW-0872">Ion channel impairing toxin</keyword>
<keyword id="KW-0964">Secreted</keyword>
<keyword id="KW-0732">Signal</keyword>
<keyword id="KW-0800">Toxin</keyword>
<keyword id="KW-1218">Voltage-gated calcium channel impairing toxin</keyword>
<protein>
    <recommendedName>
        <fullName evidence="2">Scoloptoxin SSD976</fullName>
    </recommendedName>
    <alternativeName>
        <fullName evidence="3">Cysteine-rich venom protein</fullName>
        <shortName evidence="3">CRVP</shortName>
    </alternativeName>
</protein>
<accession>P0DPU1</accession>
<organism>
    <name type="scientific">Scolopendra dehaani</name>
    <name type="common">Thai centipede</name>
    <name type="synonym">Scolopendra subspinipes dehaani</name>
    <dbReference type="NCBI Taxonomy" id="2609776"/>
    <lineage>
        <taxon>Eukaryota</taxon>
        <taxon>Metazoa</taxon>
        <taxon>Ecdysozoa</taxon>
        <taxon>Arthropoda</taxon>
        <taxon>Myriapoda</taxon>
        <taxon>Chilopoda</taxon>
        <taxon>Pleurostigmophora</taxon>
        <taxon>Scolopendromorpha</taxon>
        <taxon>Scolopendridae</taxon>
        <taxon>Scolopendra</taxon>
    </lineage>
</organism>
<sequence>MNILLSSTLFVLLMFQIIGSGMGCDMKVRGLDANMKKMILDLHNKKRQIVANGQQSGQPSAANMKELHWNDEIAANAQRSAETCVFEHTAKSLRKTTKYSYLGENIYKGSYPDPIPRSVNAWYDEVKDVTPAVVKSFSSGGPMIGHYTQMVWANTEALGCGLVTASDRNSYLFCQYGPGGNYRSQPIYKQGPPASDCKNGKSSKYPGLCN</sequence>
<feature type="signal peptide" evidence="1">
    <location>
        <begin position="1"/>
        <end position="23"/>
    </location>
</feature>
<feature type="chain" id="PRO_0000446849" description="Scoloptoxin SSD976" evidence="1">
    <location>
        <begin position="24"/>
        <end position="210"/>
    </location>
</feature>
<dbReference type="EMBL" id="KC144967">
    <property type="status" value="NOT_ANNOTATED_CDS"/>
    <property type="molecule type" value="mRNA"/>
</dbReference>
<dbReference type="SMR" id="P0DPU1"/>
<dbReference type="GO" id="GO:0005576">
    <property type="term" value="C:extracellular region"/>
    <property type="evidence" value="ECO:0007669"/>
    <property type="project" value="UniProtKB-SubCell"/>
</dbReference>
<dbReference type="GO" id="GO:0005246">
    <property type="term" value="F:calcium channel regulator activity"/>
    <property type="evidence" value="ECO:0007669"/>
    <property type="project" value="UniProtKB-KW"/>
</dbReference>
<dbReference type="GO" id="GO:0090729">
    <property type="term" value="F:toxin activity"/>
    <property type="evidence" value="ECO:0007669"/>
    <property type="project" value="UniProtKB-KW"/>
</dbReference>
<dbReference type="CDD" id="cd05380">
    <property type="entry name" value="CAP_euk"/>
    <property type="match status" value="1"/>
</dbReference>
<dbReference type="Gene3D" id="3.40.33.10">
    <property type="entry name" value="CAP"/>
    <property type="match status" value="1"/>
</dbReference>
<dbReference type="InterPro" id="IPR018244">
    <property type="entry name" value="Allrgn_V5/Tpx1_CS"/>
</dbReference>
<dbReference type="InterPro" id="IPR014044">
    <property type="entry name" value="CAP_dom"/>
</dbReference>
<dbReference type="InterPro" id="IPR035940">
    <property type="entry name" value="CAP_sf"/>
</dbReference>
<dbReference type="InterPro" id="IPR001283">
    <property type="entry name" value="CRISP-related"/>
</dbReference>
<dbReference type="InterPro" id="IPR002413">
    <property type="entry name" value="V5_allergen-like"/>
</dbReference>
<dbReference type="PANTHER" id="PTHR10334">
    <property type="entry name" value="CYSTEINE-RICH SECRETORY PROTEIN-RELATED"/>
    <property type="match status" value="1"/>
</dbReference>
<dbReference type="Pfam" id="PF00188">
    <property type="entry name" value="CAP"/>
    <property type="match status" value="1"/>
</dbReference>
<dbReference type="PRINTS" id="PR00838">
    <property type="entry name" value="V5ALLERGEN"/>
</dbReference>
<dbReference type="PRINTS" id="PR00837">
    <property type="entry name" value="V5TPXLIKE"/>
</dbReference>
<dbReference type="SMART" id="SM00198">
    <property type="entry name" value="SCP"/>
    <property type="match status" value="1"/>
</dbReference>
<dbReference type="SUPFAM" id="SSF55797">
    <property type="entry name" value="PR-1-like"/>
    <property type="match status" value="1"/>
</dbReference>
<dbReference type="PROSITE" id="PS01009">
    <property type="entry name" value="CRISP_1"/>
    <property type="match status" value="1"/>
</dbReference>
<dbReference type="PROSITE" id="PS01010">
    <property type="entry name" value="CRISP_2"/>
    <property type="match status" value="1"/>
</dbReference>
<evidence type="ECO:0000269" key="1">
    <source>
    </source>
</evidence>
<evidence type="ECO:0000303" key="2">
    <source>
    </source>
</evidence>
<evidence type="ECO:0000305" key="3"/>
<evidence type="ECO:0000305" key="4">
    <source>
    </source>
</evidence>
<proteinExistence type="evidence at protein level"/>
<reference key="1">
    <citation type="journal article" date="2012" name="J. Proteome Res.">
        <title>Venomic and transcriptomic analysis of centipede Scolopendra subspinipes dehaani.</title>
        <authorList>
            <person name="Liu Z.C."/>
            <person name="Zhang R."/>
            <person name="Zhao F."/>
            <person name="Chen Z.M."/>
            <person name="Liu H.W."/>
            <person name="Wang Y.J."/>
            <person name="Jiang P."/>
            <person name="Zhang Y."/>
            <person name="Wu Y."/>
            <person name="Ding J.P."/>
            <person name="Lee W.H."/>
            <person name="Zhang Y."/>
        </authorList>
    </citation>
    <scope>NUCLEOTIDE SEQUENCE [MRNA]</scope>
    <scope>PROTEIN SEQUENCE OF 24-50</scope>
    <scope>SUBCELLULAR LOCATION</scope>
    <scope>MASS SPECTROMETRY</scope>
    <scope>FUNCTION</scope>
    <source>
        <tissue>Venom</tissue>
        <tissue>Venom gland</tissue>
    </source>
</reference>
<name>VA576_SCODE</name>